<dbReference type="EMBL" id="CR859499">
    <property type="protein sequence ID" value="CAH91668.1"/>
    <property type="molecule type" value="mRNA"/>
</dbReference>
<dbReference type="EMBL" id="CR861072">
    <property type="protein sequence ID" value="CAH93153.1"/>
    <property type="molecule type" value="mRNA"/>
</dbReference>
<dbReference type="RefSeq" id="NP_001126859.1">
    <property type="nucleotide sequence ID" value="NM_001133387.1"/>
</dbReference>
<dbReference type="SMR" id="Q5R513"/>
<dbReference type="FunCoup" id="Q5R513">
    <property type="interactions" value="2565"/>
</dbReference>
<dbReference type="STRING" id="9601.ENSPPYP00000022172"/>
<dbReference type="MEROPS" id="M16.985"/>
<dbReference type="MEROPS" id="M16.P01"/>
<dbReference type="GeneID" id="100173868"/>
<dbReference type="KEGG" id="pon:100173868"/>
<dbReference type="CTD" id="23203"/>
<dbReference type="eggNOG" id="KOG2067">
    <property type="taxonomic scope" value="Eukaryota"/>
</dbReference>
<dbReference type="InParanoid" id="Q5R513"/>
<dbReference type="OrthoDB" id="277191at2759"/>
<dbReference type="Proteomes" id="UP000001595">
    <property type="component" value="Unplaced"/>
</dbReference>
<dbReference type="GO" id="GO:0005743">
    <property type="term" value="C:mitochondrial inner membrane"/>
    <property type="evidence" value="ECO:0000250"/>
    <property type="project" value="UniProtKB"/>
</dbReference>
<dbReference type="GO" id="GO:0005759">
    <property type="term" value="C:mitochondrial matrix"/>
    <property type="evidence" value="ECO:0007669"/>
    <property type="project" value="UniProtKB-SubCell"/>
</dbReference>
<dbReference type="GO" id="GO:0046872">
    <property type="term" value="F:metal ion binding"/>
    <property type="evidence" value="ECO:0007669"/>
    <property type="project" value="InterPro"/>
</dbReference>
<dbReference type="GO" id="GO:0004222">
    <property type="term" value="F:metalloendopeptidase activity"/>
    <property type="evidence" value="ECO:0007669"/>
    <property type="project" value="InterPro"/>
</dbReference>
<dbReference type="GO" id="GO:0006627">
    <property type="term" value="P:protein processing involved in protein targeting to mitochondrion"/>
    <property type="evidence" value="ECO:0000250"/>
    <property type="project" value="UniProtKB"/>
</dbReference>
<dbReference type="FunFam" id="3.30.830.10:FF:000010">
    <property type="entry name" value="Mitochondrial-processing peptidase alpha subunit, mitochondrial"/>
    <property type="match status" value="1"/>
</dbReference>
<dbReference type="FunFam" id="3.30.830.10:FF:000014">
    <property type="entry name" value="Mitochondrial-processing peptidase alpha subunit, mitochondrial"/>
    <property type="match status" value="1"/>
</dbReference>
<dbReference type="Gene3D" id="3.30.830.10">
    <property type="entry name" value="Metalloenzyme, LuxS/M16 peptidase-like"/>
    <property type="match status" value="2"/>
</dbReference>
<dbReference type="InterPro" id="IPR011249">
    <property type="entry name" value="Metalloenz_LuxS/M16"/>
</dbReference>
<dbReference type="InterPro" id="IPR050361">
    <property type="entry name" value="MPP/UQCRC_Complex"/>
</dbReference>
<dbReference type="InterPro" id="IPR011765">
    <property type="entry name" value="Pept_M16_N"/>
</dbReference>
<dbReference type="InterPro" id="IPR001431">
    <property type="entry name" value="Pept_M16_Zn_BS"/>
</dbReference>
<dbReference type="InterPro" id="IPR007863">
    <property type="entry name" value="Peptidase_M16_C"/>
</dbReference>
<dbReference type="PANTHER" id="PTHR11851">
    <property type="entry name" value="METALLOPROTEASE"/>
    <property type="match status" value="1"/>
</dbReference>
<dbReference type="PANTHER" id="PTHR11851:SF192">
    <property type="entry name" value="MITOCHONDRIAL-PROCESSING PEPTIDASE SUBUNIT ALPHA"/>
    <property type="match status" value="1"/>
</dbReference>
<dbReference type="Pfam" id="PF00675">
    <property type="entry name" value="Peptidase_M16"/>
    <property type="match status" value="1"/>
</dbReference>
<dbReference type="Pfam" id="PF05193">
    <property type="entry name" value="Peptidase_M16_C"/>
    <property type="match status" value="1"/>
</dbReference>
<dbReference type="SUPFAM" id="SSF63411">
    <property type="entry name" value="LuxS/MPP-like metallohydrolase"/>
    <property type="match status" value="2"/>
</dbReference>
<dbReference type="PROSITE" id="PS00143">
    <property type="entry name" value="INSULINASE"/>
    <property type="match status" value="1"/>
</dbReference>
<accession>Q5R513</accession>
<accession>Q5R992</accession>
<organism>
    <name type="scientific">Pongo abelii</name>
    <name type="common">Sumatran orangutan</name>
    <name type="synonym">Pongo pygmaeus abelii</name>
    <dbReference type="NCBI Taxonomy" id="9601"/>
    <lineage>
        <taxon>Eukaryota</taxon>
        <taxon>Metazoa</taxon>
        <taxon>Chordata</taxon>
        <taxon>Craniata</taxon>
        <taxon>Vertebrata</taxon>
        <taxon>Euteleostomi</taxon>
        <taxon>Mammalia</taxon>
        <taxon>Eutheria</taxon>
        <taxon>Euarchontoglires</taxon>
        <taxon>Primates</taxon>
        <taxon>Haplorrhini</taxon>
        <taxon>Catarrhini</taxon>
        <taxon>Hominidae</taxon>
        <taxon>Pongo</taxon>
    </lineage>
</organism>
<protein>
    <recommendedName>
        <fullName>Mitochondrial-processing peptidase subunit alpha</fullName>
    </recommendedName>
    <alternativeName>
        <fullName>Alpha-MPP</fullName>
    </alternativeName>
    <alternativeName>
        <fullName evidence="6">Inactive zinc metalloprotease alpha</fullName>
    </alternativeName>
</protein>
<reference key="1">
    <citation type="submission" date="2004-11" db="EMBL/GenBank/DDBJ databases">
        <authorList>
            <consortium name="The German cDNA consortium"/>
        </authorList>
    </citation>
    <scope>NUCLEOTIDE SEQUENCE [LARGE SCALE MRNA]</scope>
    <source>
        <tissue>Brain cortex</tissue>
    </source>
</reference>
<evidence type="ECO:0000250" key="1"/>
<evidence type="ECO:0000250" key="2">
    <source>
        <dbReference type="UniProtKB" id="P11914"/>
    </source>
</evidence>
<evidence type="ECO:0000250" key="3">
    <source>
        <dbReference type="UniProtKB" id="P20069"/>
    </source>
</evidence>
<evidence type="ECO:0000250" key="4">
    <source>
        <dbReference type="UniProtKB" id="Q10713"/>
    </source>
</evidence>
<evidence type="ECO:0000250" key="5">
    <source>
        <dbReference type="UniProtKB" id="Q9DC61"/>
    </source>
</evidence>
<evidence type="ECO:0000305" key="6"/>
<feature type="transit peptide" description="Mitochondrion" evidence="1">
    <location>
        <begin position="1"/>
        <end position="33"/>
    </location>
</feature>
<feature type="chain" id="PRO_0000045849" description="Mitochondrial-processing peptidase subunit alpha">
    <location>
        <begin position="34"/>
        <end position="525"/>
    </location>
</feature>
<feature type="modified residue" description="N6-succinyllysine" evidence="5">
    <location>
        <position position="64"/>
    </location>
</feature>
<feature type="modified residue" description="N6-acetyllysine" evidence="4">
    <location>
        <position position="299"/>
    </location>
</feature>
<feature type="sequence conflict" description="In Ref. 1; CAH93153." evidence="6" ref="1">
    <original>C</original>
    <variation>S</variation>
    <location>
        <position position="20"/>
    </location>
</feature>
<feature type="sequence conflict" description="In Ref. 1; CAH93153." evidence="6" ref="1">
    <original>R</original>
    <variation>L</variation>
    <location>
        <position position="300"/>
    </location>
</feature>
<comment type="function">
    <text evidence="4">Substrate recognition and binding subunit of the essential mitochondrial processing protease (MPP), which cleaves the mitochondrial sequence off newly imported precursors proteins.</text>
</comment>
<comment type="subunit">
    <text evidence="2">Heterodimer of PMPCA (alpha) and PMPCB (beta) subunits, forming the mitochondrial processing protease (MPP) in which PMPCA is involved in substrate recognition and binding and PMPCB is the catalytic subunit.</text>
</comment>
<comment type="subcellular location">
    <subcellularLocation>
        <location evidence="3">Mitochondrion matrix</location>
    </subcellularLocation>
    <subcellularLocation>
        <location evidence="4">Mitochondrion inner membrane</location>
    </subcellularLocation>
</comment>
<comment type="similarity">
    <text evidence="6">Belongs to the peptidase M16 family.</text>
</comment>
<comment type="caution">
    <text evidence="6">Does not seem to have protease activity as it lacks the zinc-binding site.</text>
</comment>
<name>MPPA_PONAB</name>
<proteinExistence type="evidence at transcript level"/>
<keyword id="KW-0007">Acetylation</keyword>
<keyword id="KW-0472">Membrane</keyword>
<keyword id="KW-0496">Mitochondrion</keyword>
<keyword id="KW-0999">Mitochondrion inner membrane</keyword>
<keyword id="KW-1185">Reference proteome</keyword>
<keyword id="KW-0809">Transit peptide</keyword>
<gene>
    <name type="primary">PMPCA</name>
</gene>
<sequence>MAAVVLAATRLLRGSGSWGCSRLRFGPPAYRRFSSGGAYPNIPLSSPLPGVPKPVFATVDGQEKFETKVTTLDNGLRVASQNKFGQFCTVGILINSGSRYEAKYLSGIAHFLEKLAFSSTARFDSKDEILLTLEKHGGICDCQTSRDTTMYAVSADSKGLDTVVGLLADVVLQPRLTDEEVEMTRMTVQFELEDLNLRPDPEPLLTEMIHEAAYRENTVGLHRFCPTENIAKINREVLHSYLRNYYTPDRMVLAGVGVEHEHLVDCARKYLLGIQPAWGSAEAVDIDRSVAQYTGGIAKRERDMSNVSLGPTPIPELTHIMVGLESCSFLEEDFIPFAVLNMMMGGGGSFSAGGPGKGMFSRLYLNVLNRHHWMYNATSYHHSYEDTGLLCIHASADPRQVREMVEIITKEFILMSGTVDAVELERAKTQLTSMLMMNLESRPVIFEDVGRQVLATRSRKLPHELCTLIRNVKPEDVKRVASKMLRGKPAVAALGDLTDLPTYEHIQTALSSKDGRLPRTYRLFR</sequence>